<comment type="function">
    <text evidence="2">Component of a multi-subunit complex, PPK2 (poly P kinase complex 2) involved in microtubule based vesicle motility. It is associated with the centrosome. PPK2 complex can synthesize a poly chain of hundreds of phosphate residues linked by ATP-like bonds.</text>
</comment>
<comment type="subcellular location">
    <subcellularLocation>
        <location evidence="2">Cytoplasm</location>
        <location evidence="2">Cytoskeleton</location>
    </subcellularLocation>
    <subcellularLocation>
        <location evidence="2">Cytoplasm</location>
        <location evidence="2">Cytoskeleton</location>
        <location evidence="2">Microtubule organizing center</location>
        <location evidence="2">Centrosome</location>
    </subcellularLocation>
</comment>
<comment type="similarity">
    <text evidence="3">Belongs to the actin family. ARP1 subfamily.</text>
</comment>
<gene>
    <name type="primary">arpA</name>
    <name type="synonym">Arp1</name>
    <name type="ORF">DDB_G0288937</name>
</gene>
<name>ACTY_DICDI</name>
<evidence type="ECO:0000256" key="1">
    <source>
        <dbReference type="SAM" id="MobiDB-lite"/>
    </source>
</evidence>
<evidence type="ECO:0000269" key="2">
    <source>
    </source>
</evidence>
<evidence type="ECO:0000305" key="3"/>
<keyword id="KW-0067">ATP-binding</keyword>
<keyword id="KW-0963">Cytoplasm</keyword>
<keyword id="KW-0206">Cytoskeleton</keyword>
<keyword id="KW-0903">Direct protein sequencing</keyword>
<keyword id="KW-0547">Nucleotide-binding</keyword>
<keyword id="KW-1185">Reference proteome</keyword>
<dbReference type="EMBL" id="AAFI02000126">
    <property type="protein sequence ID" value="EAL62992.1"/>
    <property type="molecule type" value="Genomic_DNA"/>
</dbReference>
<dbReference type="RefSeq" id="XP_636500.1">
    <property type="nucleotide sequence ID" value="XM_631408.1"/>
</dbReference>
<dbReference type="SMR" id="Q54I79"/>
<dbReference type="FunCoup" id="Q54I79">
    <property type="interactions" value="119"/>
</dbReference>
<dbReference type="STRING" id="44689.Q54I79"/>
<dbReference type="PaxDb" id="44689-DDB0220489"/>
<dbReference type="EnsemblProtists" id="EAL62992">
    <property type="protein sequence ID" value="EAL62992"/>
    <property type="gene ID" value="DDB_G0288937"/>
</dbReference>
<dbReference type="GeneID" id="8626883"/>
<dbReference type="KEGG" id="ddi:DDB_G0288937"/>
<dbReference type="dictyBase" id="DDB_G0288937">
    <property type="gene designation" value="arpA"/>
</dbReference>
<dbReference type="VEuPathDB" id="AmoebaDB:DDB_G0288937"/>
<dbReference type="eggNOG" id="KOG0676">
    <property type="taxonomic scope" value="Eukaryota"/>
</dbReference>
<dbReference type="HOGENOM" id="CLU_027965_0_2_1"/>
<dbReference type="InParanoid" id="Q54I79"/>
<dbReference type="OMA" id="YTTWTGG"/>
<dbReference type="PhylomeDB" id="Q54I79"/>
<dbReference type="Reactome" id="R-DDI-6798695">
    <property type="pathway name" value="Neutrophil degranulation"/>
</dbReference>
<dbReference type="Reactome" id="R-DDI-6807878">
    <property type="pathway name" value="COPI-mediated anterograde transport"/>
</dbReference>
<dbReference type="PRO" id="PR:Q54I79"/>
<dbReference type="Proteomes" id="UP000002195">
    <property type="component" value="Chromosome 5"/>
</dbReference>
<dbReference type="GO" id="GO:0005813">
    <property type="term" value="C:centrosome"/>
    <property type="evidence" value="ECO:0000314"/>
    <property type="project" value="UniProtKB"/>
</dbReference>
<dbReference type="GO" id="GO:0005737">
    <property type="term" value="C:cytoplasm"/>
    <property type="evidence" value="ECO:0007669"/>
    <property type="project" value="UniProtKB-KW"/>
</dbReference>
<dbReference type="GO" id="GO:0005869">
    <property type="term" value="C:dynactin complex"/>
    <property type="evidence" value="ECO:0000318"/>
    <property type="project" value="GO_Central"/>
</dbReference>
<dbReference type="GO" id="GO:0005524">
    <property type="term" value="F:ATP binding"/>
    <property type="evidence" value="ECO:0007669"/>
    <property type="project" value="UniProtKB-KW"/>
</dbReference>
<dbReference type="GO" id="GO:0008976">
    <property type="term" value="F:polyphosphate kinase activity"/>
    <property type="evidence" value="ECO:0000314"/>
    <property type="project" value="dictyBase"/>
</dbReference>
<dbReference type="GO" id="GO:0016192">
    <property type="term" value="P:vesicle-mediated transport"/>
    <property type="evidence" value="ECO:0000314"/>
    <property type="project" value="UniProtKB"/>
</dbReference>
<dbReference type="CDD" id="cd10216">
    <property type="entry name" value="ASKHA_NBD_Arp1"/>
    <property type="match status" value="1"/>
</dbReference>
<dbReference type="FunFam" id="3.30.420.40:FF:000188">
    <property type="entry name" value="Actin like 6B"/>
    <property type="match status" value="1"/>
</dbReference>
<dbReference type="FunFam" id="3.90.640.10:FF:000008">
    <property type="entry name" value="alpha-centractin isoform X1"/>
    <property type="match status" value="1"/>
</dbReference>
<dbReference type="FunFam" id="3.30.420.40:FF:000058">
    <property type="entry name" value="Putative actin-related protein 5"/>
    <property type="match status" value="1"/>
</dbReference>
<dbReference type="Gene3D" id="3.30.420.40">
    <property type="match status" value="2"/>
</dbReference>
<dbReference type="Gene3D" id="3.90.640.10">
    <property type="entry name" value="Actin, Chain A, domain 4"/>
    <property type="match status" value="1"/>
</dbReference>
<dbReference type="InterPro" id="IPR004000">
    <property type="entry name" value="Actin"/>
</dbReference>
<dbReference type="InterPro" id="IPR004001">
    <property type="entry name" value="Actin_CS"/>
</dbReference>
<dbReference type="InterPro" id="IPR043129">
    <property type="entry name" value="ATPase_NBD"/>
</dbReference>
<dbReference type="PANTHER" id="PTHR11937">
    <property type="entry name" value="ACTIN"/>
    <property type="match status" value="1"/>
</dbReference>
<dbReference type="Pfam" id="PF00022">
    <property type="entry name" value="Actin"/>
    <property type="match status" value="1"/>
</dbReference>
<dbReference type="PRINTS" id="PR00190">
    <property type="entry name" value="ACTIN"/>
</dbReference>
<dbReference type="SMART" id="SM00268">
    <property type="entry name" value="ACTIN"/>
    <property type="match status" value="1"/>
</dbReference>
<dbReference type="SUPFAM" id="SSF53067">
    <property type="entry name" value="Actin-like ATPase domain"/>
    <property type="match status" value="2"/>
</dbReference>
<dbReference type="PROSITE" id="PS00432">
    <property type="entry name" value="ACTINS_2"/>
    <property type="match status" value="1"/>
</dbReference>
<protein>
    <recommendedName>
        <fullName>Centractin</fullName>
    </recommendedName>
    <alternativeName>
        <fullName>Actin-related protein A</fullName>
    </alternativeName>
</protein>
<reference key="1">
    <citation type="journal article" date="2005" name="Nature">
        <title>The genome of the social amoeba Dictyostelium discoideum.</title>
        <authorList>
            <person name="Eichinger L."/>
            <person name="Pachebat J.A."/>
            <person name="Gloeckner G."/>
            <person name="Rajandream M.A."/>
            <person name="Sucgang R."/>
            <person name="Berriman M."/>
            <person name="Song J."/>
            <person name="Olsen R."/>
            <person name="Szafranski K."/>
            <person name="Xu Q."/>
            <person name="Tunggal B."/>
            <person name="Kummerfeld S."/>
            <person name="Madera M."/>
            <person name="Konfortov B.A."/>
            <person name="Rivero F."/>
            <person name="Bankier A.T."/>
            <person name="Lehmann R."/>
            <person name="Hamlin N."/>
            <person name="Davies R."/>
            <person name="Gaudet P."/>
            <person name="Fey P."/>
            <person name="Pilcher K."/>
            <person name="Chen G."/>
            <person name="Saunders D."/>
            <person name="Sodergren E.J."/>
            <person name="Davis P."/>
            <person name="Kerhornou A."/>
            <person name="Nie X."/>
            <person name="Hall N."/>
            <person name="Anjard C."/>
            <person name="Hemphill L."/>
            <person name="Bason N."/>
            <person name="Farbrother P."/>
            <person name="Desany B."/>
            <person name="Just E."/>
            <person name="Morio T."/>
            <person name="Rost R."/>
            <person name="Churcher C.M."/>
            <person name="Cooper J."/>
            <person name="Haydock S."/>
            <person name="van Driessche N."/>
            <person name="Cronin A."/>
            <person name="Goodhead I."/>
            <person name="Muzny D.M."/>
            <person name="Mourier T."/>
            <person name="Pain A."/>
            <person name="Lu M."/>
            <person name="Harper D."/>
            <person name="Lindsay R."/>
            <person name="Hauser H."/>
            <person name="James K.D."/>
            <person name="Quiles M."/>
            <person name="Madan Babu M."/>
            <person name="Saito T."/>
            <person name="Buchrieser C."/>
            <person name="Wardroper A."/>
            <person name="Felder M."/>
            <person name="Thangavelu M."/>
            <person name="Johnson D."/>
            <person name="Knights A."/>
            <person name="Loulseged H."/>
            <person name="Mungall K.L."/>
            <person name="Oliver K."/>
            <person name="Price C."/>
            <person name="Quail M.A."/>
            <person name="Urushihara H."/>
            <person name="Hernandez J."/>
            <person name="Rabbinowitsch E."/>
            <person name="Steffen D."/>
            <person name="Sanders M."/>
            <person name="Ma J."/>
            <person name="Kohara Y."/>
            <person name="Sharp S."/>
            <person name="Simmonds M.N."/>
            <person name="Spiegler S."/>
            <person name="Tivey A."/>
            <person name="Sugano S."/>
            <person name="White B."/>
            <person name="Walker D."/>
            <person name="Woodward J.R."/>
            <person name="Winckler T."/>
            <person name="Tanaka Y."/>
            <person name="Shaulsky G."/>
            <person name="Schleicher M."/>
            <person name="Weinstock G.M."/>
            <person name="Rosenthal A."/>
            <person name="Cox E.C."/>
            <person name="Chisholm R.L."/>
            <person name="Gibbs R.A."/>
            <person name="Loomis W.F."/>
            <person name="Platzer M."/>
            <person name="Kay R.R."/>
            <person name="Williams J.G."/>
            <person name="Dear P.H."/>
            <person name="Noegel A.A."/>
            <person name="Barrell B.G."/>
            <person name="Kuspa A."/>
        </authorList>
    </citation>
    <scope>NUCLEOTIDE SEQUENCE [LARGE SCALE GENOMIC DNA]</scope>
    <source>
        <strain>AX4</strain>
    </source>
</reference>
<reference key="2">
    <citation type="journal article" date="2004" name="Proc. Natl. Acad. Sci. U.S.A.">
        <title>Formation of an actin-like filament concurrent with the enzymatic synthesis of inorganic polyphosphate.</title>
        <authorList>
            <person name="Gomez-Garcia M.R."/>
            <person name="Kornberg A."/>
        </authorList>
    </citation>
    <scope>PROTEIN SEQUENCE OF 22-40; 46-62; 110-117; 218-228; 230-235; 243-262; 93-310 AND 362-370</scope>
    <scope>FUNCTION</scope>
    <scope>SUBCELLULAR LOCATION</scope>
</reference>
<feature type="chain" id="PRO_0000328041" description="Centractin">
    <location>
        <begin position="1"/>
        <end position="383"/>
    </location>
</feature>
<feature type="region of interest" description="Disordered" evidence="1">
    <location>
        <begin position="227"/>
        <end position="246"/>
    </location>
</feature>
<sequence>MSSVEFSNQPVVIDNGSGVIKAGFAGQDPPSHIFQSLVGNPKYKKVMGLNIENESTYFVGDRINDWRGILKLKHPMDHGIVSNWSDMERVWTYTYDQLKIQPSEHPVLLTDVPNNPRLHRERAAQLFFETYNAPALYFSIPAVLSLYASGRTTGIVLDSGDGVTHVVPVFEGFALPHAISRIDIAGRDITEYLQHLLRRSGYNFKTSAEKEVVRIIKEKTCYVAHDPQKEEELLEPDSSSSKPVQPQYTLPDGNVIELGAERFRAPEILFHPDIIGDESLGIHQCLDMSIRKSDLDLRKTFYSNIILGGGSTLFQGFGDRLLNEVKKLAPKDIKIKITAPPERKYSAWMGGSILASLSTFKDLWVTRQEYEEDGCSVIHRKIF</sequence>
<accession>Q54I79</accession>
<organism>
    <name type="scientific">Dictyostelium discoideum</name>
    <name type="common">Social amoeba</name>
    <dbReference type="NCBI Taxonomy" id="44689"/>
    <lineage>
        <taxon>Eukaryota</taxon>
        <taxon>Amoebozoa</taxon>
        <taxon>Evosea</taxon>
        <taxon>Eumycetozoa</taxon>
        <taxon>Dictyostelia</taxon>
        <taxon>Dictyosteliales</taxon>
        <taxon>Dictyosteliaceae</taxon>
        <taxon>Dictyostelium</taxon>
    </lineage>
</organism>
<proteinExistence type="evidence at protein level"/>